<protein>
    <recommendedName>
        <fullName>Transcriptional regulator MraZ</fullName>
    </recommendedName>
</protein>
<organism>
    <name type="scientific">Neisseria gonorrhoeae (strain ATCC 700825 / FA 1090)</name>
    <dbReference type="NCBI Taxonomy" id="242231"/>
    <lineage>
        <taxon>Bacteria</taxon>
        <taxon>Pseudomonadati</taxon>
        <taxon>Pseudomonadota</taxon>
        <taxon>Betaproteobacteria</taxon>
        <taxon>Neisseriales</taxon>
        <taxon>Neisseriaceae</taxon>
        <taxon>Neisseria</taxon>
    </lineage>
</organism>
<dbReference type="EMBL" id="AE004969">
    <property type="protein sequence ID" value="AAW90181.1"/>
    <property type="molecule type" value="Genomic_DNA"/>
</dbReference>
<dbReference type="RefSeq" id="WP_003689463.1">
    <property type="nucleotide sequence ID" value="NC_002946.2"/>
</dbReference>
<dbReference type="RefSeq" id="YP_208593.1">
    <property type="nucleotide sequence ID" value="NC_002946.2"/>
</dbReference>
<dbReference type="SMR" id="Q5F6K6"/>
<dbReference type="STRING" id="242231.NGO_1545"/>
<dbReference type="GeneID" id="66753751"/>
<dbReference type="KEGG" id="ngo:NGO_1545"/>
<dbReference type="PATRIC" id="fig|242231.10.peg.1842"/>
<dbReference type="HOGENOM" id="CLU_107907_2_0_4"/>
<dbReference type="Proteomes" id="UP000000535">
    <property type="component" value="Chromosome"/>
</dbReference>
<dbReference type="GO" id="GO:0005737">
    <property type="term" value="C:cytoplasm"/>
    <property type="evidence" value="ECO:0007669"/>
    <property type="project" value="UniProtKB-UniRule"/>
</dbReference>
<dbReference type="GO" id="GO:0009295">
    <property type="term" value="C:nucleoid"/>
    <property type="evidence" value="ECO:0007669"/>
    <property type="project" value="UniProtKB-SubCell"/>
</dbReference>
<dbReference type="GO" id="GO:0003700">
    <property type="term" value="F:DNA-binding transcription factor activity"/>
    <property type="evidence" value="ECO:0007669"/>
    <property type="project" value="UniProtKB-UniRule"/>
</dbReference>
<dbReference type="GO" id="GO:0000976">
    <property type="term" value="F:transcription cis-regulatory region binding"/>
    <property type="evidence" value="ECO:0007669"/>
    <property type="project" value="TreeGrafter"/>
</dbReference>
<dbReference type="GO" id="GO:2000143">
    <property type="term" value="P:negative regulation of DNA-templated transcription initiation"/>
    <property type="evidence" value="ECO:0007669"/>
    <property type="project" value="TreeGrafter"/>
</dbReference>
<dbReference type="CDD" id="cd16321">
    <property type="entry name" value="MraZ_C"/>
    <property type="match status" value="1"/>
</dbReference>
<dbReference type="CDD" id="cd16320">
    <property type="entry name" value="MraZ_N"/>
    <property type="match status" value="1"/>
</dbReference>
<dbReference type="FunFam" id="3.40.1550.20:FF:000006">
    <property type="entry name" value="Transcriptional regulator MraZ"/>
    <property type="match status" value="1"/>
</dbReference>
<dbReference type="Gene3D" id="3.40.1550.20">
    <property type="entry name" value="Transcriptional regulator MraZ domain"/>
    <property type="match status" value="1"/>
</dbReference>
<dbReference type="HAMAP" id="MF_01008">
    <property type="entry name" value="MraZ"/>
    <property type="match status" value="1"/>
</dbReference>
<dbReference type="InterPro" id="IPR003444">
    <property type="entry name" value="MraZ"/>
</dbReference>
<dbReference type="InterPro" id="IPR035644">
    <property type="entry name" value="MraZ_C"/>
</dbReference>
<dbReference type="InterPro" id="IPR020603">
    <property type="entry name" value="MraZ_dom"/>
</dbReference>
<dbReference type="InterPro" id="IPR035642">
    <property type="entry name" value="MraZ_N"/>
</dbReference>
<dbReference type="InterPro" id="IPR038619">
    <property type="entry name" value="MraZ_sf"/>
</dbReference>
<dbReference type="InterPro" id="IPR007159">
    <property type="entry name" value="SpoVT-AbrB_dom"/>
</dbReference>
<dbReference type="InterPro" id="IPR037914">
    <property type="entry name" value="SpoVT-AbrB_sf"/>
</dbReference>
<dbReference type="NCBIfam" id="TIGR00242">
    <property type="entry name" value="division/cell wall cluster transcriptional repressor MraZ"/>
    <property type="match status" value="1"/>
</dbReference>
<dbReference type="PANTHER" id="PTHR34701">
    <property type="entry name" value="TRANSCRIPTIONAL REGULATOR MRAZ"/>
    <property type="match status" value="1"/>
</dbReference>
<dbReference type="PANTHER" id="PTHR34701:SF1">
    <property type="entry name" value="TRANSCRIPTIONAL REGULATOR MRAZ"/>
    <property type="match status" value="1"/>
</dbReference>
<dbReference type="Pfam" id="PF02381">
    <property type="entry name" value="MraZ"/>
    <property type="match status" value="2"/>
</dbReference>
<dbReference type="SUPFAM" id="SSF89447">
    <property type="entry name" value="AbrB/MazE/MraZ-like"/>
    <property type="match status" value="1"/>
</dbReference>
<dbReference type="PROSITE" id="PS51740">
    <property type="entry name" value="SPOVT_ABRB"/>
    <property type="match status" value="2"/>
</dbReference>
<comment type="subunit">
    <text evidence="1">Forms oligomers.</text>
</comment>
<comment type="subcellular location">
    <subcellularLocation>
        <location evidence="1">Cytoplasm</location>
        <location evidence="1">Nucleoid</location>
    </subcellularLocation>
</comment>
<comment type="similarity">
    <text evidence="1">Belongs to the MraZ family.</text>
</comment>
<accession>Q5F6K6</accession>
<sequence length="151" mass="17186">MFGGAHELSIDSKGRLAVPAKFRDILSRLYTPAVVATLESKHKLLMYPVAEWEKVAAQLLNLKVADNPVLRRFQNLLLHNAEILEWDSAGRVLVPAGLRKRVDFDREVVLVGRANRLELWGREQWEAEMVQALDDDPDELAFQLSQTDLQL</sequence>
<reference key="1">
    <citation type="submission" date="2003-03" db="EMBL/GenBank/DDBJ databases">
        <title>The complete genome sequence of Neisseria gonorrhoeae.</title>
        <authorList>
            <person name="Lewis L.A."/>
            <person name="Gillaspy A.F."/>
            <person name="McLaughlin R.E."/>
            <person name="Gipson M."/>
            <person name="Ducey T.F."/>
            <person name="Ownbey T."/>
            <person name="Hartman K."/>
            <person name="Nydick C."/>
            <person name="Carson M.B."/>
            <person name="Vaughn J."/>
            <person name="Thomson C."/>
            <person name="Song L."/>
            <person name="Lin S."/>
            <person name="Yuan X."/>
            <person name="Najar F."/>
            <person name="Zhan M."/>
            <person name="Ren Q."/>
            <person name="Zhu H."/>
            <person name="Qi S."/>
            <person name="Kenton S.M."/>
            <person name="Lai H."/>
            <person name="White J.D."/>
            <person name="Clifton S."/>
            <person name="Roe B.A."/>
            <person name="Dyer D.W."/>
        </authorList>
    </citation>
    <scope>NUCLEOTIDE SEQUENCE [LARGE SCALE GENOMIC DNA]</scope>
    <source>
        <strain>ATCC 700825 / FA 1090</strain>
    </source>
</reference>
<proteinExistence type="inferred from homology"/>
<evidence type="ECO:0000255" key="1">
    <source>
        <dbReference type="HAMAP-Rule" id="MF_01008"/>
    </source>
</evidence>
<evidence type="ECO:0000255" key="2">
    <source>
        <dbReference type="PROSITE-ProRule" id="PRU01076"/>
    </source>
</evidence>
<name>MRAZ_NEIG1</name>
<gene>
    <name evidence="1" type="primary">mraZ</name>
    <name type="ordered locus">NGO_1545</name>
</gene>
<keyword id="KW-0963">Cytoplasm</keyword>
<keyword id="KW-0238">DNA-binding</keyword>
<keyword id="KW-1185">Reference proteome</keyword>
<keyword id="KW-0677">Repeat</keyword>
<keyword id="KW-0804">Transcription</keyword>
<keyword id="KW-0805">Transcription regulation</keyword>
<feature type="chain" id="PRO_0000108512" description="Transcriptional regulator MraZ">
    <location>
        <begin position="1"/>
        <end position="151"/>
    </location>
</feature>
<feature type="domain" description="SpoVT-AbrB 1" evidence="2">
    <location>
        <begin position="5"/>
        <end position="51"/>
    </location>
</feature>
<feature type="domain" description="SpoVT-AbrB 2" evidence="2">
    <location>
        <begin position="81"/>
        <end position="124"/>
    </location>
</feature>